<feature type="chain" id="PRO_0000428830" description="Ectoine TRAP transporter small permease protein TeaB">
    <location>
        <begin position="1"/>
        <end position="193"/>
    </location>
</feature>
<feature type="transmembrane region" description="Helical" evidence="1">
    <location>
        <begin position="33"/>
        <end position="55"/>
    </location>
</feature>
<feature type="transmembrane region" description="Helical" evidence="1">
    <location>
        <begin position="65"/>
        <end position="82"/>
    </location>
</feature>
<feature type="transmembrane region" description="Helical" evidence="1">
    <location>
        <begin position="103"/>
        <end position="125"/>
    </location>
</feature>
<feature type="transmembrane region" description="Helical" evidence="1">
    <location>
        <begin position="145"/>
        <end position="167"/>
    </location>
</feature>
<proteinExistence type="evidence at protein level"/>
<name>TEAB_HALED</name>
<accession>E1VBK2</accession>
<accession>Q8VPB2</accession>
<gene>
    <name type="primary">teaB</name>
    <name type="ordered locus">HELO_4275</name>
</gene>
<organism>
    <name type="scientific">Halomonas elongata (strain ATCC 33173 / DSM 2581 / NBRC 15536 / NCIMB 2198 / 1H9)</name>
    <dbReference type="NCBI Taxonomy" id="768066"/>
    <lineage>
        <taxon>Bacteria</taxon>
        <taxon>Pseudomonadati</taxon>
        <taxon>Pseudomonadota</taxon>
        <taxon>Gammaproteobacteria</taxon>
        <taxon>Oceanospirillales</taxon>
        <taxon>Halomonadaceae</taxon>
        <taxon>Halomonas</taxon>
    </lineage>
</organism>
<comment type="function">
    <text evidence="2">Part of the tripartite ATP-independent periplasmic (TRAP) transport system TeaABC involved in the uptake of ectoine and hydroxyectoine in response to osmotic upshock. Probably functions as a recovery system for synthesized ectoine that leaks out of the cell.</text>
</comment>
<comment type="subunit">
    <text evidence="2">The complex comprises the extracytoplasmic solute receptor protein TeaA, and the two transmembrane proteins TeaB and TeaC.</text>
</comment>
<comment type="subcellular location">
    <subcellularLocation>
        <location evidence="3">Cell inner membrane</location>
        <topology evidence="3">Multi-pass membrane protein</topology>
    </subcellularLocation>
</comment>
<comment type="disruption phenotype">
    <text evidence="2">Deletion abolishes accumulation of ectoine from the medium.</text>
</comment>
<comment type="similarity">
    <text evidence="3">Belongs to the TRAP transporter small permease family.</text>
</comment>
<evidence type="ECO:0000255" key="1"/>
<evidence type="ECO:0000269" key="2">
    <source>
    </source>
</evidence>
<evidence type="ECO:0000305" key="3"/>
<protein>
    <recommendedName>
        <fullName>Ectoine TRAP transporter small permease protein TeaB</fullName>
    </recommendedName>
</protein>
<reference key="1">
    <citation type="journal article" date="2002" name="J. Bacteriol.">
        <title>New type of osmoregulated solute transporter identified in halophilic members of the bacteria domain: TRAP transporter TeaABC mediates uptake of ectoine and hydroxyectoine in Halomonas elongata DSM 2581(T).</title>
        <authorList>
            <person name="Grammann K."/>
            <person name="Volke A."/>
            <person name="Kunte H.J."/>
        </authorList>
    </citation>
    <scope>NUCLEOTIDE SEQUENCE [GENOMIC DNA]</scope>
    <scope>FUNCTION</scope>
    <scope>SUBUNIT</scope>
    <scope>DISRUPTION PHENOTYPE</scope>
    <scope>GENE NAME</scope>
    <source>
        <strain>ATCC 33173 / DSM 2581 / NBRC 15536 / NCIMB 2198 / 1H9</strain>
    </source>
</reference>
<reference key="2">
    <citation type="journal article" date="2011" name="Environ. Microbiol.">
        <title>A blueprint of ectoine metabolism from the genome of the industrial producer Halomonas elongata DSM 2581(T).</title>
        <authorList>
            <person name="Schwibbert K."/>
            <person name="Marin-Sanguino A."/>
            <person name="Bagyan I."/>
            <person name="Heidrich G."/>
            <person name="Lentzen G."/>
            <person name="Seitz H."/>
            <person name="Rampp M."/>
            <person name="Schuster S.C."/>
            <person name="Klenk H.P."/>
            <person name="Pfeiffer F."/>
            <person name="Oesterhelt D."/>
            <person name="Kunte H.J."/>
        </authorList>
    </citation>
    <scope>NUCLEOTIDE SEQUENCE [LARGE SCALE GENOMIC DNA]</scope>
    <source>
        <strain>ATCC 33173 / DSM 2581 / NBRC 15536 / NCIMB 2198 / 1H9</strain>
    </source>
</reference>
<sequence>MTDEEEAEKHYHSGLPGILGTIDTLISKLEAIILALGVLLMATNTVANVIGRFALGESLFFTGEVNRILIIMITFAGIGYAARHGRHIRMSAIYDALPVGGRRALMIVISLFTSLVMFFLMYYSVHYVLDLYDKGRILPALGFPIFIIYVWVPLGFLITGIQYLFTAIKNLTSRDVYLSTSVVDGYKDTETEV</sequence>
<dbReference type="EMBL" id="AY061646">
    <property type="protein sequence ID" value="AAL29685.2"/>
    <property type="molecule type" value="Genomic_DNA"/>
</dbReference>
<dbReference type="EMBL" id="FN869568">
    <property type="protein sequence ID" value="CBV44159.1"/>
    <property type="molecule type" value="Genomic_DNA"/>
</dbReference>
<dbReference type="RefSeq" id="WP_013334029.1">
    <property type="nucleotide sequence ID" value="NC_014532.2"/>
</dbReference>
<dbReference type="SMR" id="E1VBK2"/>
<dbReference type="STRING" id="768066.HELO_4275"/>
<dbReference type="TCDB" id="2.A.56.1.11">
    <property type="family name" value="the tripartite atp-independent periplasmic transporter (trap-t) family"/>
</dbReference>
<dbReference type="GeneID" id="91011725"/>
<dbReference type="KEGG" id="hel:HELO_4275"/>
<dbReference type="eggNOG" id="COG3090">
    <property type="taxonomic scope" value="Bacteria"/>
</dbReference>
<dbReference type="HOGENOM" id="CLU_086356_3_7_6"/>
<dbReference type="OrthoDB" id="5465095at2"/>
<dbReference type="Proteomes" id="UP000008707">
    <property type="component" value="Chromosome"/>
</dbReference>
<dbReference type="GO" id="GO:0005886">
    <property type="term" value="C:plasma membrane"/>
    <property type="evidence" value="ECO:0007669"/>
    <property type="project" value="UniProtKB-SubCell"/>
</dbReference>
<dbReference type="InterPro" id="IPR055348">
    <property type="entry name" value="DctQ"/>
</dbReference>
<dbReference type="InterPro" id="IPR007387">
    <property type="entry name" value="TRAP_DctQ"/>
</dbReference>
<dbReference type="PANTHER" id="PTHR35011">
    <property type="entry name" value="2,3-DIKETO-L-GULONATE TRAP TRANSPORTER SMALL PERMEASE PROTEIN YIAM"/>
    <property type="match status" value="1"/>
</dbReference>
<dbReference type="Pfam" id="PF04290">
    <property type="entry name" value="DctQ"/>
    <property type="match status" value="1"/>
</dbReference>
<keyword id="KW-0997">Cell inner membrane</keyword>
<keyword id="KW-1003">Cell membrane</keyword>
<keyword id="KW-0472">Membrane</keyword>
<keyword id="KW-0812">Transmembrane</keyword>
<keyword id="KW-1133">Transmembrane helix</keyword>
<keyword id="KW-0813">Transport</keyword>